<feature type="chain" id="PRO_1000055694" description="Large ribosomal subunit protein uL14">
    <location>
        <begin position="1"/>
        <end position="122"/>
    </location>
</feature>
<dbReference type="EMBL" id="AM420293">
    <property type="protein sequence ID" value="CAM05990.1"/>
    <property type="molecule type" value="Genomic_DNA"/>
</dbReference>
<dbReference type="RefSeq" id="WP_009948641.1">
    <property type="nucleotide sequence ID" value="NC_009142.1"/>
</dbReference>
<dbReference type="SMR" id="A4FPL5"/>
<dbReference type="STRING" id="405948.SACE_6826"/>
<dbReference type="KEGG" id="sen:SACE_6826"/>
<dbReference type="eggNOG" id="COG0093">
    <property type="taxonomic scope" value="Bacteria"/>
</dbReference>
<dbReference type="HOGENOM" id="CLU_095071_2_1_11"/>
<dbReference type="OrthoDB" id="9806379at2"/>
<dbReference type="Proteomes" id="UP000006728">
    <property type="component" value="Chromosome"/>
</dbReference>
<dbReference type="GO" id="GO:0022625">
    <property type="term" value="C:cytosolic large ribosomal subunit"/>
    <property type="evidence" value="ECO:0007669"/>
    <property type="project" value="TreeGrafter"/>
</dbReference>
<dbReference type="GO" id="GO:0070180">
    <property type="term" value="F:large ribosomal subunit rRNA binding"/>
    <property type="evidence" value="ECO:0007669"/>
    <property type="project" value="TreeGrafter"/>
</dbReference>
<dbReference type="GO" id="GO:0003735">
    <property type="term" value="F:structural constituent of ribosome"/>
    <property type="evidence" value="ECO:0007669"/>
    <property type="project" value="InterPro"/>
</dbReference>
<dbReference type="GO" id="GO:0006412">
    <property type="term" value="P:translation"/>
    <property type="evidence" value="ECO:0007669"/>
    <property type="project" value="UniProtKB-UniRule"/>
</dbReference>
<dbReference type="CDD" id="cd00337">
    <property type="entry name" value="Ribosomal_uL14"/>
    <property type="match status" value="1"/>
</dbReference>
<dbReference type="FunFam" id="2.40.150.20:FF:000001">
    <property type="entry name" value="50S ribosomal protein L14"/>
    <property type="match status" value="1"/>
</dbReference>
<dbReference type="Gene3D" id="2.40.150.20">
    <property type="entry name" value="Ribosomal protein L14"/>
    <property type="match status" value="1"/>
</dbReference>
<dbReference type="HAMAP" id="MF_01367">
    <property type="entry name" value="Ribosomal_uL14"/>
    <property type="match status" value="1"/>
</dbReference>
<dbReference type="InterPro" id="IPR000218">
    <property type="entry name" value="Ribosomal_uL14"/>
</dbReference>
<dbReference type="InterPro" id="IPR005745">
    <property type="entry name" value="Ribosomal_uL14_bac-type"/>
</dbReference>
<dbReference type="InterPro" id="IPR019972">
    <property type="entry name" value="Ribosomal_uL14_CS"/>
</dbReference>
<dbReference type="InterPro" id="IPR036853">
    <property type="entry name" value="Ribosomal_uL14_sf"/>
</dbReference>
<dbReference type="NCBIfam" id="TIGR01067">
    <property type="entry name" value="rplN_bact"/>
    <property type="match status" value="1"/>
</dbReference>
<dbReference type="PANTHER" id="PTHR11761">
    <property type="entry name" value="50S/60S RIBOSOMAL PROTEIN L14/L23"/>
    <property type="match status" value="1"/>
</dbReference>
<dbReference type="PANTHER" id="PTHR11761:SF3">
    <property type="entry name" value="LARGE RIBOSOMAL SUBUNIT PROTEIN UL14M"/>
    <property type="match status" value="1"/>
</dbReference>
<dbReference type="Pfam" id="PF00238">
    <property type="entry name" value="Ribosomal_L14"/>
    <property type="match status" value="1"/>
</dbReference>
<dbReference type="SMART" id="SM01374">
    <property type="entry name" value="Ribosomal_L14"/>
    <property type="match status" value="1"/>
</dbReference>
<dbReference type="SUPFAM" id="SSF50193">
    <property type="entry name" value="Ribosomal protein L14"/>
    <property type="match status" value="1"/>
</dbReference>
<dbReference type="PROSITE" id="PS00049">
    <property type="entry name" value="RIBOSOMAL_L14"/>
    <property type="match status" value="1"/>
</dbReference>
<accession>A4FPL5</accession>
<sequence length="122" mass="13371">MIQQESRLRVADNSGAKEILTIRVLGGSGRRYAGIGDIIVATVKDAIPGANVKKGEVVKAVIVRQKKEKRRADGSYIRFDENAAVLIKPSGEPRGTRIFGPVGRELRDKKYMKIISLAPEVL</sequence>
<comment type="function">
    <text evidence="1">Binds to 23S rRNA. Forms part of two intersubunit bridges in the 70S ribosome.</text>
</comment>
<comment type="subunit">
    <text evidence="1">Part of the 50S ribosomal subunit. Forms a cluster with proteins L3 and L19. In the 70S ribosome, L14 and L19 interact and together make contacts with the 16S rRNA in bridges B5 and B8.</text>
</comment>
<comment type="similarity">
    <text evidence="1">Belongs to the universal ribosomal protein uL14 family.</text>
</comment>
<gene>
    <name evidence="1" type="primary">rplN</name>
    <name type="ordered locus">SACE_6826</name>
</gene>
<protein>
    <recommendedName>
        <fullName evidence="1">Large ribosomal subunit protein uL14</fullName>
    </recommendedName>
    <alternativeName>
        <fullName evidence="2">50S ribosomal protein L14</fullName>
    </alternativeName>
</protein>
<name>RL14_SACEN</name>
<evidence type="ECO:0000255" key="1">
    <source>
        <dbReference type="HAMAP-Rule" id="MF_01367"/>
    </source>
</evidence>
<evidence type="ECO:0000305" key="2"/>
<organism>
    <name type="scientific">Saccharopolyspora erythraea (strain ATCC 11635 / DSM 40517 / JCM 4748 / NBRC 13426 / NCIMB 8594 / NRRL 2338)</name>
    <dbReference type="NCBI Taxonomy" id="405948"/>
    <lineage>
        <taxon>Bacteria</taxon>
        <taxon>Bacillati</taxon>
        <taxon>Actinomycetota</taxon>
        <taxon>Actinomycetes</taxon>
        <taxon>Pseudonocardiales</taxon>
        <taxon>Pseudonocardiaceae</taxon>
        <taxon>Saccharopolyspora</taxon>
    </lineage>
</organism>
<keyword id="KW-1185">Reference proteome</keyword>
<keyword id="KW-0687">Ribonucleoprotein</keyword>
<keyword id="KW-0689">Ribosomal protein</keyword>
<keyword id="KW-0694">RNA-binding</keyword>
<keyword id="KW-0699">rRNA-binding</keyword>
<reference key="1">
    <citation type="journal article" date="2007" name="Nat. Biotechnol.">
        <title>Complete genome sequence of the erythromycin-producing bacterium Saccharopolyspora erythraea NRRL23338.</title>
        <authorList>
            <person name="Oliynyk M."/>
            <person name="Samborskyy M."/>
            <person name="Lester J.B."/>
            <person name="Mironenko T."/>
            <person name="Scott N."/>
            <person name="Dickens S."/>
            <person name="Haydock S.F."/>
            <person name="Leadlay P.F."/>
        </authorList>
    </citation>
    <scope>NUCLEOTIDE SEQUENCE [LARGE SCALE GENOMIC DNA]</scope>
    <source>
        <strain>ATCC 11635 / DSM 40517 / JCM 4748 / NBRC 13426 / NCIMB 8594 / NRRL 2338</strain>
    </source>
</reference>
<proteinExistence type="inferred from homology"/>